<name>TSR1_DICDI</name>
<organism>
    <name type="scientific">Dictyostelium discoideum</name>
    <name type="common">Social amoeba</name>
    <dbReference type="NCBI Taxonomy" id="44689"/>
    <lineage>
        <taxon>Eukaryota</taxon>
        <taxon>Amoebozoa</taxon>
        <taxon>Evosea</taxon>
        <taxon>Eumycetozoa</taxon>
        <taxon>Dictyostelia</taxon>
        <taxon>Dictyosteliales</taxon>
        <taxon>Dictyosteliaceae</taxon>
        <taxon>Dictyostelium</taxon>
    </lineage>
</organism>
<gene>
    <name type="primary">tsr1</name>
    <name type="ORF">DDB_G0278331</name>
</gene>
<proteinExistence type="inferred from homology"/>
<comment type="function">
    <text evidence="1">Required during maturation of the 40S ribosomal subunit in the nucleolus.</text>
</comment>
<comment type="subcellular location">
    <subcellularLocation>
        <location evidence="1">Nucleus</location>
        <location evidence="1">Nucleolus</location>
    </subcellularLocation>
</comment>
<comment type="similarity">
    <text evidence="4">Belongs to the TRAFAC class translation factor GTPase superfamily. Bms1-like GTPase family. TSR1 subfamily.</text>
</comment>
<keyword id="KW-0539">Nucleus</keyword>
<keyword id="KW-1185">Reference proteome</keyword>
<keyword id="KW-0690">Ribosome biogenesis</keyword>
<reference key="1">
    <citation type="journal article" date="2005" name="Nature">
        <title>The genome of the social amoeba Dictyostelium discoideum.</title>
        <authorList>
            <person name="Eichinger L."/>
            <person name="Pachebat J.A."/>
            <person name="Gloeckner G."/>
            <person name="Rajandream M.A."/>
            <person name="Sucgang R."/>
            <person name="Berriman M."/>
            <person name="Song J."/>
            <person name="Olsen R."/>
            <person name="Szafranski K."/>
            <person name="Xu Q."/>
            <person name="Tunggal B."/>
            <person name="Kummerfeld S."/>
            <person name="Madera M."/>
            <person name="Konfortov B.A."/>
            <person name="Rivero F."/>
            <person name="Bankier A.T."/>
            <person name="Lehmann R."/>
            <person name="Hamlin N."/>
            <person name="Davies R."/>
            <person name="Gaudet P."/>
            <person name="Fey P."/>
            <person name="Pilcher K."/>
            <person name="Chen G."/>
            <person name="Saunders D."/>
            <person name="Sodergren E.J."/>
            <person name="Davis P."/>
            <person name="Kerhornou A."/>
            <person name="Nie X."/>
            <person name="Hall N."/>
            <person name="Anjard C."/>
            <person name="Hemphill L."/>
            <person name="Bason N."/>
            <person name="Farbrother P."/>
            <person name="Desany B."/>
            <person name="Just E."/>
            <person name="Morio T."/>
            <person name="Rost R."/>
            <person name="Churcher C.M."/>
            <person name="Cooper J."/>
            <person name="Haydock S."/>
            <person name="van Driessche N."/>
            <person name="Cronin A."/>
            <person name="Goodhead I."/>
            <person name="Muzny D.M."/>
            <person name="Mourier T."/>
            <person name="Pain A."/>
            <person name="Lu M."/>
            <person name="Harper D."/>
            <person name="Lindsay R."/>
            <person name="Hauser H."/>
            <person name="James K.D."/>
            <person name="Quiles M."/>
            <person name="Madan Babu M."/>
            <person name="Saito T."/>
            <person name="Buchrieser C."/>
            <person name="Wardroper A."/>
            <person name="Felder M."/>
            <person name="Thangavelu M."/>
            <person name="Johnson D."/>
            <person name="Knights A."/>
            <person name="Loulseged H."/>
            <person name="Mungall K.L."/>
            <person name="Oliver K."/>
            <person name="Price C."/>
            <person name="Quail M.A."/>
            <person name="Urushihara H."/>
            <person name="Hernandez J."/>
            <person name="Rabbinowitsch E."/>
            <person name="Steffen D."/>
            <person name="Sanders M."/>
            <person name="Ma J."/>
            <person name="Kohara Y."/>
            <person name="Sharp S."/>
            <person name="Simmonds M.N."/>
            <person name="Spiegler S."/>
            <person name="Tivey A."/>
            <person name="Sugano S."/>
            <person name="White B."/>
            <person name="Walker D."/>
            <person name="Woodward J.R."/>
            <person name="Winckler T."/>
            <person name="Tanaka Y."/>
            <person name="Shaulsky G."/>
            <person name="Schleicher M."/>
            <person name="Weinstock G.M."/>
            <person name="Rosenthal A."/>
            <person name="Cox E.C."/>
            <person name="Chisholm R.L."/>
            <person name="Gibbs R.A."/>
            <person name="Loomis W.F."/>
            <person name="Platzer M."/>
            <person name="Kay R.R."/>
            <person name="Williams J.G."/>
            <person name="Dear P.H."/>
            <person name="Noegel A.A."/>
            <person name="Barrell B.G."/>
            <person name="Kuspa A."/>
        </authorList>
    </citation>
    <scope>NUCLEOTIDE SEQUENCE [LARGE SCALE GENOMIC DNA]</scope>
    <source>
        <strain>AX4</strain>
    </source>
</reference>
<accession>Q54YA7</accession>
<feature type="chain" id="PRO_0000339129" description="Pre-rRNA-processing protein TSR1 homolog">
    <location>
        <begin position="1"/>
        <end position="826"/>
    </location>
</feature>
<feature type="domain" description="Bms1-type G" evidence="2">
    <location>
        <begin position="86"/>
        <end position="261"/>
    </location>
</feature>
<feature type="region of interest" description="Disordered" evidence="3">
    <location>
        <begin position="1"/>
        <end position="37"/>
    </location>
</feature>
<feature type="region of interest" description="Disordered" evidence="3">
    <location>
        <begin position="329"/>
        <end position="348"/>
    </location>
</feature>
<feature type="region of interest" description="Disordered" evidence="3">
    <location>
        <begin position="397"/>
        <end position="532"/>
    </location>
</feature>
<feature type="compositionally biased region" description="Low complexity" evidence="3">
    <location>
        <begin position="332"/>
        <end position="342"/>
    </location>
</feature>
<feature type="compositionally biased region" description="Acidic residues" evidence="3">
    <location>
        <begin position="416"/>
        <end position="434"/>
    </location>
</feature>
<feature type="compositionally biased region" description="Acidic residues" evidence="3">
    <location>
        <begin position="441"/>
        <end position="467"/>
    </location>
</feature>
<feature type="compositionally biased region" description="Acidic residues" evidence="3">
    <location>
        <begin position="491"/>
        <end position="510"/>
    </location>
</feature>
<sequence>MSEHRHRSGDLHQQNKGFKGGKHDSKGAIKRRAQGKIETNGARQSIKNLAIVNNKDAMRQKHQKLVKSKKNELLERKRLGLPDQVAPRVVTIIKLSESCNTKKVKEMLLQKFKLNINTGEMEMDNEETLNNKNNNNDNFTTISLTSKVRMMLLECQTMAYDQVIEFCKLSDIILFVIDANQAKLNSEAERIFTIVKAQSVPTVIEIIQNLDQTPIKKRNELKKSIQSVFHFHFPNEPKVLPMDTNDECSQVLRYIENIHVNEIIWRKVRPYMLIEKSSYIPETKVVTIDGFIRGNNLSAKQIIHIPDYGDFQIEKIELIDDPHIRKKSYYTNNNNNNSNNNNTGGGEMEQDKKINILDKVDQKDKDTLQTWNVPDPMDNEQALPTAEEMKEIEANKKKKLVPKGTSGYQSSWYLDNESDEEEENFENEDLDMNQEEMGQDKEEEMGEEEEMGEEEEEEEEGQEELEEVKESNKWKGIKHKSQITDELLKDSDDEDDDENKEEQSEDEDEDERKQLQQDEILYPDEVDTPGNVPSRIRFSKFRGLKSFRSSPWDVKENLPIDYAKIFQFHSFNQSMRASIAILDNAPAKPDMYVRIHLVNGPKQLVERNTTAITTKPEVAVGLYRYENKISLLHFSVEKHKSYEETVRSKEEVYFHFGWRKFSTSPIYSISSPNCDKQKFEKFLLPARNTMATIYGPITYPPAPLLIFNGKDCNELVATGYLSSVNPDRIICKRIILTGVIAKSISKKFVTVKDMFYYPEDINWFKKVELYTKMGRVGHIKEPLGTHGRMKCQFDGTMNQQDTVCMNLYKRVYPKWIKDDSSLLKLE</sequence>
<protein>
    <recommendedName>
        <fullName>Pre-rRNA-processing protein TSR1 homolog</fullName>
    </recommendedName>
</protein>
<evidence type="ECO:0000250" key="1"/>
<evidence type="ECO:0000255" key="2">
    <source>
        <dbReference type="PROSITE-ProRule" id="PRU01051"/>
    </source>
</evidence>
<evidence type="ECO:0000256" key="3">
    <source>
        <dbReference type="SAM" id="MobiDB-lite"/>
    </source>
</evidence>
<evidence type="ECO:0000305" key="4"/>
<dbReference type="EMBL" id="AAFI02000023">
    <property type="protein sequence ID" value="EAL68338.1"/>
    <property type="molecule type" value="Genomic_DNA"/>
</dbReference>
<dbReference type="RefSeq" id="XP_642295.1">
    <property type="nucleotide sequence ID" value="XM_637203.1"/>
</dbReference>
<dbReference type="SMR" id="Q54YA7"/>
<dbReference type="FunCoup" id="Q54YA7">
    <property type="interactions" value="526"/>
</dbReference>
<dbReference type="STRING" id="44689.Q54YA7"/>
<dbReference type="PaxDb" id="44689-DDB0205380"/>
<dbReference type="EnsemblProtists" id="EAL68338">
    <property type="protein sequence ID" value="EAL68338"/>
    <property type="gene ID" value="DDB_G0278331"/>
</dbReference>
<dbReference type="GeneID" id="8621502"/>
<dbReference type="KEGG" id="ddi:DDB_G0278331"/>
<dbReference type="dictyBase" id="DDB_G0278331"/>
<dbReference type="VEuPathDB" id="AmoebaDB:DDB_G0278331"/>
<dbReference type="eggNOG" id="KOG1980">
    <property type="taxonomic scope" value="Eukaryota"/>
</dbReference>
<dbReference type="HOGENOM" id="CLU_009858_1_0_1"/>
<dbReference type="InParanoid" id="Q54YA7"/>
<dbReference type="OMA" id="MNLPRFK"/>
<dbReference type="PhylomeDB" id="Q54YA7"/>
<dbReference type="PRO" id="PR:Q54YA7"/>
<dbReference type="Proteomes" id="UP000002195">
    <property type="component" value="Chromosome 3"/>
</dbReference>
<dbReference type="GO" id="GO:0005730">
    <property type="term" value="C:nucleolus"/>
    <property type="evidence" value="ECO:0007669"/>
    <property type="project" value="UniProtKB-SubCell"/>
</dbReference>
<dbReference type="GO" id="GO:0005525">
    <property type="term" value="F:GTP binding"/>
    <property type="evidence" value="ECO:0000318"/>
    <property type="project" value="GO_Central"/>
</dbReference>
<dbReference type="GO" id="GO:0003924">
    <property type="term" value="F:GTPase activity"/>
    <property type="evidence" value="ECO:0000318"/>
    <property type="project" value="GO_Central"/>
</dbReference>
<dbReference type="GO" id="GO:0034511">
    <property type="term" value="F:U3 snoRNA binding"/>
    <property type="evidence" value="ECO:0000318"/>
    <property type="project" value="GO_Central"/>
</dbReference>
<dbReference type="GO" id="GO:0000479">
    <property type="term" value="P:endonucleolytic cleavage of tricistronic rRNA transcript (SSU-rRNA, 5.8S rRNA, LSU-rRNA)"/>
    <property type="evidence" value="ECO:0000318"/>
    <property type="project" value="GO_Central"/>
</dbReference>
<dbReference type="GO" id="GO:0000462">
    <property type="term" value="P:maturation of SSU-rRNA from tricistronic rRNA transcript (SSU-rRNA, 5.8S rRNA, LSU-rRNA)"/>
    <property type="evidence" value="ECO:0000318"/>
    <property type="project" value="GO_Central"/>
</dbReference>
<dbReference type="InterPro" id="IPR012948">
    <property type="entry name" value="AARP2CN"/>
</dbReference>
<dbReference type="InterPro" id="IPR039761">
    <property type="entry name" value="Bms1/Tsr1"/>
</dbReference>
<dbReference type="InterPro" id="IPR007034">
    <property type="entry name" value="BMS1_TSR1_C"/>
</dbReference>
<dbReference type="InterPro" id="IPR030387">
    <property type="entry name" value="G_Bms1/Tsr1_dom"/>
</dbReference>
<dbReference type="PANTHER" id="PTHR12858:SF1">
    <property type="entry name" value="PRE-RRNA-PROCESSING PROTEIN TSR1 HOMOLOG"/>
    <property type="match status" value="1"/>
</dbReference>
<dbReference type="PANTHER" id="PTHR12858">
    <property type="entry name" value="RIBOSOME BIOGENESIS PROTEIN"/>
    <property type="match status" value="1"/>
</dbReference>
<dbReference type="Pfam" id="PF08142">
    <property type="entry name" value="AARP2CN"/>
    <property type="match status" value="1"/>
</dbReference>
<dbReference type="Pfam" id="PF04950">
    <property type="entry name" value="RIBIOP_C"/>
    <property type="match status" value="1"/>
</dbReference>
<dbReference type="Pfam" id="PF22298">
    <property type="entry name" value="Tsr1_G-like"/>
    <property type="match status" value="1"/>
</dbReference>
<dbReference type="SMART" id="SM00785">
    <property type="entry name" value="AARP2CN"/>
    <property type="match status" value="1"/>
</dbReference>
<dbReference type="SMART" id="SM01362">
    <property type="entry name" value="DUF663"/>
    <property type="match status" value="1"/>
</dbReference>
<dbReference type="PROSITE" id="PS51714">
    <property type="entry name" value="G_BMS1"/>
    <property type="match status" value="1"/>
</dbReference>